<evidence type="ECO:0000250" key="1"/>
<evidence type="ECO:0000255" key="2"/>
<evidence type="ECO:0000305" key="3"/>
<reference key="1">
    <citation type="journal article" date="2004" name="Proc. Natl. Acad. Sci. U.S.A.">
        <title>Complete genomes of two clinical Staphylococcus aureus strains: evidence for the rapid evolution of virulence and drug resistance.</title>
        <authorList>
            <person name="Holden M.T.G."/>
            <person name="Feil E.J."/>
            <person name="Lindsay J.A."/>
            <person name="Peacock S.J."/>
            <person name="Day N.P.J."/>
            <person name="Enright M.C."/>
            <person name="Foster T.J."/>
            <person name="Moore C.E."/>
            <person name="Hurst L."/>
            <person name="Atkin R."/>
            <person name="Barron A."/>
            <person name="Bason N."/>
            <person name="Bentley S.D."/>
            <person name="Chillingworth C."/>
            <person name="Chillingworth T."/>
            <person name="Churcher C."/>
            <person name="Clark L."/>
            <person name="Corton C."/>
            <person name="Cronin A."/>
            <person name="Doggett J."/>
            <person name="Dowd L."/>
            <person name="Feltwell T."/>
            <person name="Hance Z."/>
            <person name="Harris B."/>
            <person name="Hauser H."/>
            <person name="Holroyd S."/>
            <person name="Jagels K."/>
            <person name="James K.D."/>
            <person name="Lennard N."/>
            <person name="Line A."/>
            <person name="Mayes R."/>
            <person name="Moule S."/>
            <person name="Mungall K."/>
            <person name="Ormond D."/>
            <person name="Quail M.A."/>
            <person name="Rabbinowitsch E."/>
            <person name="Rutherford K.M."/>
            <person name="Sanders M."/>
            <person name="Sharp S."/>
            <person name="Simmonds M."/>
            <person name="Stevens K."/>
            <person name="Whitehead S."/>
            <person name="Barrell B.G."/>
            <person name="Spratt B.G."/>
            <person name="Parkhill J."/>
        </authorList>
    </citation>
    <scope>NUCLEOTIDE SEQUENCE [LARGE SCALE GENOMIC DNA]</scope>
    <source>
        <strain>MRSA252</strain>
    </source>
</reference>
<protein>
    <recommendedName>
        <fullName>Putative ribose uptake protein RbsU</fullName>
    </recommendedName>
</protein>
<proteinExistence type="inferred from homology"/>
<sequence length="293" mass="31243">MSIVALLIGLGPLIGWGFFPTVASKFGGKPVHQIIGATVGTLIFAIILAVVTSSGFPTGTNLLFALLSGAGWGFGQIITFKAFELVGSSRAMPVTTAFQLLGASLWGVFALGNWPGIGHKIIGFTALVVILIGARMTVWSERKEASNAKNLRRAVVLLLIGEFGYWLYSAAPQATSIDGLTAFLPQAMGMVIVAVIYGFMNMKAENPFRNKITWLQIISGFFFAFGALTYLISAQPNMNGLATGFILSQTSVVLATLTGIYFLKQHKTSKEMVITIIGLVLILVAASVTVFIK</sequence>
<comment type="function">
    <text evidence="1">Could be involved in the uptake of ribose.</text>
</comment>
<comment type="subcellular location">
    <subcellularLocation>
        <location evidence="3">Cell membrane</location>
        <topology evidence="3">Multi-pass membrane protein</topology>
    </subcellularLocation>
</comment>
<comment type="similarity">
    <text evidence="3">Belongs to the GRP transporter (TC 2.A.7.5) family.</text>
</comment>
<keyword id="KW-1003">Cell membrane</keyword>
<keyword id="KW-0472">Membrane</keyword>
<keyword id="KW-0762">Sugar transport</keyword>
<keyword id="KW-0812">Transmembrane</keyword>
<keyword id="KW-1133">Transmembrane helix</keyword>
<keyword id="KW-0813">Transport</keyword>
<feature type="chain" id="PRO_0000213640" description="Putative ribose uptake protein RbsU">
    <location>
        <begin position="1"/>
        <end position="293"/>
    </location>
</feature>
<feature type="transmembrane region" description="Helical" evidence="2">
    <location>
        <begin position="5"/>
        <end position="24"/>
    </location>
</feature>
<feature type="transmembrane region" description="Helical" evidence="2">
    <location>
        <begin position="34"/>
        <end position="51"/>
    </location>
</feature>
<feature type="transmembrane region" description="Helical" evidence="2">
    <location>
        <begin position="58"/>
        <end position="80"/>
    </location>
</feature>
<feature type="transmembrane region" description="Helical" evidence="2">
    <location>
        <begin position="95"/>
        <end position="114"/>
    </location>
</feature>
<feature type="transmembrane region" description="Helical" evidence="2">
    <location>
        <begin position="121"/>
        <end position="138"/>
    </location>
</feature>
<feature type="transmembrane region" description="Helical" evidence="2">
    <location>
        <begin position="153"/>
        <end position="170"/>
    </location>
</feature>
<feature type="transmembrane region" description="Helical" evidence="2">
    <location>
        <begin position="177"/>
        <end position="199"/>
    </location>
</feature>
<feature type="transmembrane region" description="Helical" evidence="2">
    <location>
        <begin position="212"/>
        <end position="234"/>
    </location>
</feature>
<feature type="transmembrane region" description="Helical" evidence="2">
    <location>
        <begin position="241"/>
        <end position="263"/>
    </location>
</feature>
<feature type="transmembrane region" description="Helical" evidence="2">
    <location>
        <begin position="273"/>
        <end position="292"/>
    </location>
</feature>
<name>RBSU_STAAR</name>
<dbReference type="EMBL" id="BX571856">
    <property type="protein sequence ID" value="CAG39294.1"/>
    <property type="molecule type" value="Genomic_DNA"/>
</dbReference>
<dbReference type="RefSeq" id="WP_000029204.1">
    <property type="nucleotide sequence ID" value="NC_002952.2"/>
</dbReference>
<dbReference type="KEGG" id="sar:SAR0268"/>
<dbReference type="HOGENOM" id="CLU_076024_0_1_9"/>
<dbReference type="Proteomes" id="UP000000596">
    <property type="component" value="Chromosome"/>
</dbReference>
<dbReference type="GO" id="GO:0005886">
    <property type="term" value="C:plasma membrane"/>
    <property type="evidence" value="ECO:0007669"/>
    <property type="project" value="UniProtKB-SubCell"/>
</dbReference>
<dbReference type="GO" id="GO:0015144">
    <property type="term" value="F:carbohydrate transmembrane transporter activity"/>
    <property type="evidence" value="ECO:0007669"/>
    <property type="project" value="InterPro"/>
</dbReference>
<dbReference type="CDD" id="cd23111">
    <property type="entry name" value="ribose_uptake_RbsU"/>
    <property type="match status" value="1"/>
</dbReference>
<dbReference type="InterPro" id="IPR010651">
    <property type="entry name" value="Sugar_transport"/>
</dbReference>
<dbReference type="NCBIfam" id="NF047342">
    <property type="entry name" value="symport_RbsU"/>
    <property type="match status" value="1"/>
</dbReference>
<dbReference type="PANTHER" id="PTHR16119">
    <property type="entry name" value="TRANSMEMBRANE PROTEIN 144"/>
    <property type="match status" value="1"/>
</dbReference>
<dbReference type="PANTHER" id="PTHR16119:SF17">
    <property type="entry name" value="TRANSMEMBRANE PROTEIN 144"/>
    <property type="match status" value="1"/>
</dbReference>
<dbReference type="Pfam" id="PF06800">
    <property type="entry name" value="Sugar_transport"/>
    <property type="match status" value="1"/>
</dbReference>
<dbReference type="SUPFAM" id="SSF103481">
    <property type="entry name" value="Multidrug resistance efflux transporter EmrE"/>
    <property type="match status" value="1"/>
</dbReference>
<organism>
    <name type="scientific">Staphylococcus aureus (strain MRSA252)</name>
    <dbReference type="NCBI Taxonomy" id="282458"/>
    <lineage>
        <taxon>Bacteria</taxon>
        <taxon>Bacillati</taxon>
        <taxon>Bacillota</taxon>
        <taxon>Bacilli</taxon>
        <taxon>Bacillales</taxon>
        <taxon>Staphylococcaceae</taxon>
        <taxon>Staphylococcus</taxon>
    </lineage>
</organism>
<gene>
    <name type="primary">rbsU</name>
    <name type="ordered locus">SAR0268</name>
</gene>
<accession>Q6GK41</accession>